<comment type="function">
    <text evidence="1">Catalyzes the transfer of a phosphate group to glutamate to form L-glutamate 5-phosphate.</text>
</comment>
<comment type="catalytic activity">
    <reaction evidence="1">
        <text>L-glutamate + ATP = L-glutamyl 5-phosphate + ADP</text>
        <dbReference type="Rhea" id="RHEA:14877"/>
        <dbReference type="ChEBI" id="CHEBI:29985"/>
        <dbReference type="ChEBI" id="CHEBI:30616"/>
        <dbReference type="ChEBI" id="CHEBI:58274"/>
        <dbReference type="ChEBI" id="CHEBI:456216"/>
        <dbReference type="EC" id="2.7.2.11"/>
    </reaction>
</comment>
<comment type="pathway">
    <text evidence="1">Amino-acid biosynthesis; L-proline biosynthesis; L-glutamate 5-semialdehyde from L-glutamate: step 1/2.</text>
</comment>
<comment type="subcellular location">
    <subcellularLocation>
        <location evidence="1">Cytoplasm</location>
    </subcellularLocation>
</comment>
<comment type="similarity">
    <text evidence="1">Belongs to the glutamate 5-kinase family.</text>
</comment>
<evidence type="ECO:0000255" key="1">
    <source>
        <dbReference type="HAMAP-Rule" id="MF_00456"/>
    </source>
</evidence>
<feature type="chain" id="PRO_0000109749" description="Glutamate 5-kinase">
    <location>
        <begin position="1"/>
        <end position="372"/>
    </location>
</feature>
<feature type="domain" description="PUA" evidence="1">
    <location>
        <begin position="272"/>
        <end position="350"/>
    </location>
</feature>
<feature type="binding site" evidence="1">
    <location>
        <position position="6"/>
    </location>
    <ligand>
        <name>ATP</name>
        <dbReference type="ChEBI" id="CHEBI:30616"/>
    </ligand>
</feature>
<feature type="binding site" evidence="1">
    <location>
        <position position="46"/>
    </location>
    <ligand>
        <name>substrate</name>
    </ligand>
</feature>
<feature type="binding site" evidence="1">
    <location>
        <position position="133"/>
    </location>
    <ligand>
        <name>substrate</name>
    </ligand>
</feature>
<feature type="binding site" evidence="1">
    <location>
        <position position="145"/>
    </location>
    <ligand>
        <name>substrate</name>
    </ligand>
</feature>
<feature type="binding site" evidence="1">
    <location>
        <begin position="165"/>
        <end position="166"/>
    </location>
    <ligand>
        <name>ATP</name>
        <dbReference type="ChEBI" id="CHEBI:30616"/>
    </ligand>
</feature>
<feature type="binding site" evidence="1">
    <location>
        <begin position="207"/>
        <end position="213"/>
    </location>
    <ligand>
        <name>ATP</name>
        <dbReference type="ChEBI" id="CHEBI:30616"/>
    </ligand>
</feature>
<dbReference type="EC" id="2.7.2.11" evidence="1"/>
<dbReference type="EMBL" id="AE008691">
    <property type="protein sequence ID" value="AAM24501.1"/>
    <property type="molecule type" value="Genomic_DNA"/>
</dbReference>
<dbReference type="RefSeq" id="WP_009610697.1">
    <property type="nucleotide sequence ID" value="NC_003869.1"/>
</dbReference>
<dbReference type="SMR" id="Q8RAE6"/>
<dbReference type="STRING" id="273068.TTE1277"/>
<dbReference type="KEGG" id="tte:TTE1277"/>
<dbReference type="eggNOG" id="COG0263">
    <property type="taxonomic scope" value="Bacteria"/>
</dbReference>
<dbReference type="HOGENOM" id="CLU_025400_2_0_9"/>
<dbReference type="OrthoDB" id="9804434at2"/>
<dbReference type="UniPathway" id="UPA00098">
    <property type="reaction ID" value="UER00359"/>
</dbReference>
<dbReference type="Proteomes" id="UP000000555">
    <property type="component" value="Chromosome"/>
</dbReference>
<dbReference type="GO" id="GO:0005829">
    <property type="term" value="C:cytosol"/>
    <property type="evidence" value="ECO:0007669"/>
    <property type="project" value="TreeGrafter"/>
</dbReference>
<dbReference type="GO" id="GO:0005524">
    <property type="term" value="F:ATP binding"/>
    <property type="evidence" value="ECO:0007669"/>
    <property type="project" value="UniProtKB-KW"/>
</dbReference>
<dbReference type="GO" id="GO:0004349">
    <property type="term" value="F:glutamate 5-kinase activity"/>
    <property type="evidence" value="ECO:0007669"/>
    <property type="project" value="UniProtKB-UniRule"/>
</dbReference>
<dbReference type="GO" id="GO:0003723">
    <property type="term" value="F:RNA binding"/>
    <property type="evidence" value="ECO:0007669"/>
    <property type="project" value="InterPro"/>
</dbReference>
<dbReference type="GO" id="GO:0055129">
    <property type="term" value="P:L-proline biosynthetic process"/>
    <property type="evidence" value="ECO:0007669"/>
    <property type="project" value="UniProtKB-UniRule"/>
</dbReference>
<dbReference type="CDD" id="cd04242">
    <property type="entry name" value="AAK_G5K_ProB"/>
    <property type="match status" value="1"/>
</dbReference>
<dbReference type="CDD" id="cd21157">
    <property type="entry name" value="PUA_G5K"/>
    <property type="match status" value="1"/>
</dbReference>
<dbReference type="FunFam" id="2.30.130.10:FF:000007">
    <property type="entry name" value="Glutamate 5-kinase"/>
    <property type="match status" value="1"/>
</dbReference>
<dbReference type="FunFam" id="3.40.1160.10:FF:000018">
    <property type="entry name" value="Glutamate 5-kinase"/>
    <property type="match status" value="1"/>
</dbReference>
<dbReference type="Gene3D" id="3.40.1160.10">
    <property type="entry name" value="Acetylglutamate kinase-like"/>
    <property type="match status" value="2"/>
</dbReference>
<dbReference type="Gene3D" id="2.30.130.10">
    <property type="entry name" value="PUA domain"/>
    <property type="match status" value="1"/>
</dbReference>
<dbReference type="HAMAP" id="MF_00456">
    <property type="entry name" value="ProB"/>
    <property type="match status" value="1"/>
</dbReference>
<dbReference type="InterPro" id="IPR036393">
    <property type="entry name" value="AceGlu_kinase-like_sf"/>
</dbReference>
<dbReference type="InterPro" id="IPR001048">
    <property type="entry name" value="Asp/Glu/Uridylate_kinase"/>
</dbReference>
<dbReference type="InterPro" id="IPR041739">
    <property type="entry name" value="G5K_ProB"/>
</dbReference>
<dbReference type="InterPro" id="IPR001057">
    <property type="entry name" value="Glu/AcGlu_kinase"/>
</dbReference>
<dbReference type="InterPro" id="IPR011529">
    <property type="entry name" value="Glu_5kinase"/>
</dbReference>
<dbReference type="InterPro" id="IPR005715">
    <property type="entry name" value="Glu_5kinase/COase_Synthase"/>
</dbReference>
<dbReference type="InterPro" id="IPR019797">
    <property type="entry name" value="Glutamate_5-kinase_CS"/>
</dbReference>
<dbReference type="InterPro" id="IPR002478">
    <property type="entry name" value="PUA"/>
</dbReference>
<dbReference type="InterPro" id="IPR015947">
    <property type="entry name" value="PUA-like_sf"/>
</dbReference>
<dbReference type="InterPro" id="IPR036974">
    <property type="entry name" value="PUA_sf"/>
</dbReference>
<dbReference type="NCBIfam" id="TIGR01027">
    <property type="entry name" value="proB"/>
    <property type="match status" value="1"/>
</dbReference>
<dbReference type="PANTHER" id="PTHR43654">
    <property type="entry name" value="GLUTAMATE 5-KINASE"/>
    <property type="match status" value="1"/>
</dbReference>
<dbReference type="PANTHER" id="PTHR43654:SF1">
    <property type="entry name" value="ISOPENTENYL PHOSPHATE KINASE"/>
    <property type="match status" value="1"/>
</dbReference>
<dbReference type="Pfam" id="PF00696">
    <property type="entry name" value="AA_kinase"/>
    <property type="match status" value="1"/>
</dbReference>
<dbReference type="Pfam" id="PF01472">
    <property type="entry name" value="PUA"/>
    <property type="match status" value="1"/>
</dbReference>
<dbReference type="PIRSF" id="PIRSF000729">
    <property type="entry name" value="GK"/>
    <property type="match status" value="1"/>
</dbReference>
<dbReference type="PRINTS" id="PR00474">
    <property type="entry name" value="GLU5KINASE"/>
</dbReference>
<dbReference type="SMART" id="SM00359">
    <property type="entry name" value="PUA"/>
    <property type="match status" value="1"/>
</dbReference>
<dbReference type="SUPFAM" id="SSF53633">
    <property type="entry name" value="Carbamate kinase-like"/>
    <property type="match status" value="1"/>
</dbReference>
<dbReference type="SUPFAM" id="SSF88697">
    <property type="entry name" value="PUA domain-like"/>
    <property type="match status" value="1"/>
</dbReference>
<dbReference type="PROSITE" id="PS00902">
    <property type="entry name" value="GLUTAMATE_5_KINASE"/>
    <property type="match status" value="1"/>
</dbReference>
<dbReference type="PROSITE" id="PS50890">
    <property type="entry name" value="PUA"/>
    <property type="match status" value="1"/>
</dbReference>
<accession>Q8RAE6</accession>
<name>PROB_CALS4</name>
<organism>
    <name type="scientific">Caldanaerobacter subterraneus subsp. tengcongensis (strain DSM 15242 / JCM 11007 / NBRC 100824 / MB4)</name>
    <name type="common">Thermoanaerobacter tengcongensis</name>
    <dbReference type="NCBI Taxonomy" id="273068"/>
    <lineage>
        <taxon>Bacteria</taxon>
        <taxon>Bacillati</taxon>
        <taxon>Bacillota</taxon>
        <taxon>Clostridia</taxon>
        <taxon>Thermoanaerobacterales</taxon>
        <taxon>Thermoanaerobacteraceae</taxon>
        <taxon>Caldanaerobacter</taxon>
    </lineage>
</organism>
<sequence length="372" mass="40840">MRIVVKVGTSTLTHENGKLNLEIMEKLVRQIANLSNKGEEVILVTSGAIGAGMGKLNLTEKPKNLPQKQALAAIGQGLLIEIYEKFFNEYGKITAQLLLTREDFSDRKRYLNMSYTLSNLLKWGVIPVINENDTVAVEEIKIGDNDTLAALVASLVEADLLIILTDIDGLFDKDPRIYKDAKVIEVVEEFSDDLFKIAGGAGTKRGTGGMYTKIQAAKICYNSGVKMVIANGKIDNVLNRIAAGEKIGTTFLPMKNPISSRKIWIAFNAKVNGFLFVDEGAAKALVKHGKSLLPSGIVKTEGQYDVGDCVAVVDHQGREIARGLVNYSSEEVEKIKGCKTHDIESILGYKYYDEVIHRDNLVVLERGEKYGG</sequence>
<proteinExistence type="inferred from homology"/>
<gene>
    <name evidence="1" type="primary">proB</name>
    <name type="ordered locus">TTE1277</name>
</gene>
<reference key="1">
    <citation type="journal article" date="2002" name="Genome Res.">
        <title>A complete sequence of the T. tengcongensis genome.</title>
        <authorList>
            <person name="Bao Q."/>
            <person name="Tian Y."/>
            <person name="Li W."/>
            <person name="Xu Z."/>
            <person name="Xuan Z."/>
            <person name="Hu S."/>
            <person name="Dong W."/>
            <person name="Yang J."/>
            <person name="Chen Y."/>
            <person name="Xue Y."/>
            <person name="Xu Y."/>
            <person name="Lai X."/>
            <person name="Huang L."/>
            <person name="Dong X."/>
            <person name="Ma Y."/>
            <person name="Ling L."/>
            <person name="Tan H."/>
            <person name="Chen R."/>
            <person name="Wang J."/>
            <person name="Yu J."/>
            <person name="Yang H."/>
        </authorList>
    </citation>
    <scope>NUCLEOTIDE SEQUENCE [LARGE SCALE GENOMIC DNA]</scope>
    <source>
        <strain>DSM 15242 / JCM 11007 / NBRC 100824 / MB4</strain>
    </source>
</reference>
<keyword id="KW-0028">Amino-acid biosynthesis</keyword>
<keyword id="KW-0067">ATP-binding</keyword>
<keyword id="KW-0963">Cytoplasm</keyword>
<keyword id="KW-0418">Kinase</keyword>
<keyword id="KW-0547">Nucleotide-binding</keyword>
<keyword id="KW-0641">Proline biosynthesis</keyword>
<keyword id="KW-1185">Reference proteome</keyword>
<keyword id="KW-0808">Transferase</keyword>
<protein>
    <recommendedName>
        <fullName evidence="1">Glutamate 5-kinase</fullName>
        <ecNumber evidence="1">2.7.2.11</ecNumber>
    </recommendedName>
    <alternativeName>
        <fullName evidence="1">Gamma-glutamyl kinase</fullName>
        <shortName evidence="1">GK</shortName>
    </alternativeName>
</protein>